<evidence type="ECO:0000255" key="1"/>
<evidence type="ECO:0000269" key="2">
    <source>
    </source>
</evidence>
<evidence type="ECO:0000305" key="3"/>
<protein>
    <recommendedName>
        <fullName>[Asn3,Lys6,Phe13]3-14-bombesin</fullName>
    </recommendedName>
</protein>
<dbReference type="GO" id="GO:0005576">
    <property type="term" value="C:extracellular region"/>
    <property type="evidence" value="ECO:0000314"/>
    <property type="project" value="UniProtKB"/>
</dbReference>
<dbReference type="GO" id="GO:0006952">
    <property type="term" value="P:defense response"/>
    <property type="evidence" value="ECO:0007669"/>
    <property type="project" value="UniProtKB-KW"/>
</dbReference>
<dbReference type="GO" id="GO:0007218">
    <property type="term" value="P:neuropeptide signaling pathway"/>
    <property type="evidence" value="ECO:0007669"/>
    <property type="project" value="InterPro"/>
</dbReference>
<dbReference type="InterPro" id="IPR000874">
    <property type="entry name" value="Bombesin"/>
</dbReference>
<dbReference type="Pfam" id="PF02044">
    <property type="entry name" value="Bombesin"/>
    <property type="match status" value="1"/>
</dbReference>
<dbReference type="PROSITE" id="PS00257">
    <property type="entry name" value="BOMBESIN"/>
    <property type="match status" value="1"/>
</dbReference>
<name>BOMB_PELRI</name>
<organism>
    <name type="scientific">Pelophylax ridibundus</name>
    <name type="common">Marsh frog</name>
    <name type="synonym">Rana ridibunda</name>
    <dbReference type="NCBI Taxonomy" id="8406"/>
    <lineage>
        <taxon>Eukaryota</taxon>
        <taxon>Metazoa</taxon>
        <taxon>Chordata</taxon>
        <taxon>Craniata</taxon>
        <taxon>Vertebrata</taxon>
        <taxon>Euteleostomi</taxon>
        <taxon>Amphibia</taxon>
        <taxon>Batrachia</taxon>
        <taxon>Anura</taxon>
        <taxon>Neobatrachia</taxon>
        <taxon>Ranoidea</taxon>
        <taxon>Ranidae</taxon>
        <taxon>Pelophylax</taxon>
    </lineage>
</organism>
<reference evidence="3" key="1">
    <citation type="journal article" date="2008" name="Rapid Commun. Mass Spectrom.">
        <title>De novo sequencing of peptides secreted by the skin glands of the caucasian green frog Rana ridibunda.</title>
        <authorList>
            <person name="Samgina T.Y."/>
            <person name="Artemenko K.A."/>
            <person name="Gorshkov V.A."/>
            <person name="Ogourtsov S.V."/>
            <person name="Zubarev R.A."/>
            <person name="Lebedev A.T."/>
        </authorList>
    </citation>
    <scope>PROTEIN SEQUENCE</scope>
    <scope>MASS SPECTROMETRY</scope>
    <scope>AMIDATION AT MET-12</scope>
    <source>
        <tissue evidence="2">Skin secretion</tissue>
    </source>
</reference>
<sequence>NLGKQWAVGHFM</sequence>
<comment type="subcellular location">
    <subcellularLocation>
        <location evidence="3">Secreted</location>
    </subcellularLocation>
</comment>
<comment type="tissue specificity">
    <text evidence="3">Expressed by the skin glands.</text>
</comment>
<comment type="mass spectrometry"/>
<comment type="similarity">
    <text evidence="1">Belongs to the bombesin/neuromedin-B/ranatensin family.</text>
</comment>
<feature type="peptide" id="PRO_0000361085" description="[Asn3,Lys6,Phe13]3-14-bombesin">
    <location>
        <begin position="1"/>
        <end position="12"/>
    </location>
</feature>
<feature type="modified residue" description="Methionine amide" evidence="2">
    <location>
        <position position="12"/>
    </location>
</feature>
<proteinExistence type="evidence at protein level"/>
<accession>P86026</accession>
<keyword id="KW-0027">Amidation</keyword>
<keyword id="KW-0878">Amphibian defense peptide</keyword>
<keyword id="KW-0903">Direct protein sequencing</keyword>
<keyword id="KW-0964">Secreted</keyword>